<name>QCR9_YEAST</name>
<organism>
    <name type="scientific">Saccharomyces cerevisiae (strain ATCC 204508 / S288c)</name>
    <name type="common">Baker's yeast</name>
    <dbReference type="NCBI Taxonomy" id="559292"/>
    <lineage>
        <taxon>Eukaryota</taxon>
        <taxon>Fungi</taxon>
        <taxon>Dikarya</taxon>
        <taxon>Ascomycota</taxon>
        <taxon>Saccharomycotina</taxon>
        <taxon>Saccharomycetes</taxon>
        <taxon>Saccharomycetales</taxon>
        <taxon>Saccharomycetaceae</taxon>
        <taxon>Saccharomyces</taxon>
    </lineage>
</organism>
<proteinExistence type="evidence at protein level"/>
<evidence type="ECO:0000269" key="1">
    <source>
    </source>
</evidence>
<evidence type="ECO:0000269" key="2">
    <source>
    </source>
</evidence>
<evidence type="ECO:0000269" key="3">
    <source>
    </source>
</evidence>
<evidence type="ECO:0000269" key="4">
    <source>
    </source>
</evidence>
<evidence type="ECO:0000269" key="5">
    <source>
    </source>
</evidence>
<evidence type="ECO:0000269" key="6">
    <source>
    </source>
</evidence>
<evidence type="ECO:0000269" key="7">
    <source>
    </source>
</evidence>
<evidence type="ECO:0000269" key="8">
    <source>
    </source>
</evidence>
<evidence type="ECO:0000269" key="9">
    <source>
    </source>
</evidence>
<evidence type="ECO:0000305" key="10"/>
<evidence type="ECO:0000305" key="11">
    <source>
    </source>
</evidence>
<evidence type="ECO:0007829" key="12">
    <source>
        <dbReference type="PDB" id="3CX5"/>
    </source>
</evidence>
<feature type="initiator methionine" description="Removed" evidence="7">
    <location>
        <position position="1"/>
    </location>
</feature>
<feature type="chain" id="PRO_0000193558" description="Cytochrome b-c1 complex subunit 9, mitochondrial">
    <location>
        <begin position="2"/>
        <end position="66"/>
    </location>
</feature>
<feature type="topological domain" description="Mitochondrial matrix" evidence="6 8">
    <location>
        <begin position="2"/>
        <end position="17"/>
    </location>
</feature>
<feature type="transmembrane region" description="Helical" evidence="6 8">
    <location>
        <begin position="18"/>
        <end position="43"/>
    </location>
</feature>
<feature type="topological domain" description="Mitochondrial intermembrane" evidence="6 8">
    <location>
        <begin position="44"/>
        <end position="66"/>
    </location>
</feature>
<feature type="helix" evidence="12">
    <location>
        <begin position="4"/>
        <end position="11"/>
    </location>
</feature>
<feature type="helix" evidence="12">
    <location>
        <begin position="18"/>
        <end position="43"/>
    </location>
</feature>
<feature type="turn" evidence="12">
    <location>
        <begin position="44"/>
        <end position="47"/>
    </location>
</feature>
<feature type="helix" evidence="12">
    <location>
        <begin position="49"/>
        <end position="55"/>
    </location>
</feature>
<gene>
    <name type="primary">QCR9</name>
    <name type="synonym">UCR9</name>
    <name type="ordered locus">YGR183C</name>
</gene>
<accession>P22289</accession>
<accession>D6VUW6</accession>
<reference key="1">
    <citation type="journal article" date="1990" name="J. Biol. Chem.">
        <title>Isolation and characterization of QCR9, a nuclear gene encoding the 7.3-kDa subunit 9 of the Saccharomyces cerevisiae ubiquinol-cytochrome c oxidoreductase complex. An intron-containing gene with a conserved sequence occurring in the intron of COX4.</title>
        <authorList>
            <person name="Phillips J.D."/>
            <person name="Schmitt M.E."/>
            <person name="Brown T.A."/>
            <person name="Beckmann J.D."/>
            <person name="Trumpower B.L."/>
        </authorList>
    </citation>
    <scope>NUCLEOTIDE SEQUENCE [GENOMIC DNA]</scope>
    <scope>PROTEIN SEQUENCE OF 2-10</scope>
    <source>
        <strain>ATCC 64665 / S288c / DC5</strain>
    </source>
</reference>
<reference key="2">
    <citation type="journal article" date="1997" name="Yeast">
        <title>DNA sequence analysis of a 23,002 bp DNA fragment of the right arm of Saccharomyces cerevisiae chromosome VII.</title>
        <authorList>
            <person name="Arroyo J."/>
            <person name="Garcia-Gonzalez M."/>
            <person name="Garcia-Saez M.I."/>
            <person name="Sanchez-Perez M."/>
            <person name="Nombela C."/>
        </authorList>
    </citation>
    <scope>NUCLEOTIDE SEQUENCE [GENOMIC DNA]</scope>
    <source>
        <strain>ATCC 204508 / S288c</strain>
    </source>
</reference>
<reference key="3">
    <citation type="journal article" date="1997" name="Nature">
        <title>The nucleotide sequence of Saccharomyces cerevisiae chromosome VII.</title>
        <authorList>
            <person name="Tettelin H."/>
            <person name="Agostoni-Carbone M.L."/>
            <person name="Albermann K."/>
            <person name="Albers M."/>
            <person name="Arroyo J."/>
            <person name="Backes U."/>
            <person name="Barreiros T."/>
            <person name="Bertani I."/>
            <person name="Bjourson A.J."/>
            <person name="Brueckner M."/>
            <person name="Bruschi C.V."/>
            <person name="Carignani G."/>
            <person name="Castagnoli L."/>
            <person name="Cerdan E."/>
            <person name="Clemente M.L."/>
            <person name="Coblenz A."/>
            <person name="Coglievina M."/>
            <person name="Coissac E."/>
            <person name="Defoor E."/>
            <person name="Del Bino S."/>
            <person name="Delius H."/>
            <person name="Delneri D."/>
            <person name="de Wergifosse P."/>
            <person name="Dujon B."/>
            <person name="Durand P."/>
            <person name="Entian K.-D."/>
            <person name="Eraso P."/>
            <person name="Escribano V."/>
            <person name="Fabiani L."/>
            <person name="Fartmann B."/>
            <person name="Feroli F."/>
            <person name="Feuermann M."/>
            <person name="Frontali L."/>
            <person name="Garcia-Gonzalez M."/>
            <person name="Garcia-Saez M.I."/>
            <person name="Goffeau A."/>
            <person name="Guerreiro P."/>
            <person name="Hani J."/>
            <person name="Hansen M."/>
            <person name="Hebling U."/>
            <person name="Hernandez K."/>
            <person name="Heumann K."/>
            <person name="Hilger F."/>
            <person name="Hofmann B."/>
            <person name="Indge K.J."/>
            <person name="James C.M."/>
            <person name="Klima R."/>
            <person name="Koetter P."/>
            <person name="Kramer B."/>
            <person name="Kramer W."/>
            <person name="Lauquin G."/>
            <person name="Leuther H."/>
            <person name="Louis E.J."/>
            <person name="Maillier E."/>
            <person name="Marconi A."/>
            <person name="Martegani E."/>
            <person name="Mazon M.J."/>
            <person name="Mazzoni C."/>
            <person name="McReynolds A.D.K."/>
            <person name="Melchioretto P."/>
            <person name="Mewes H.-W."/>
            <person name="Minenkova O."/>
            <person name="Mueller-Auer S."/>
            <person name="Nawrocki A."/>
            <person name="Netter P."/>
            <person name="Neu R."/>
            <person name="Nombela C."/>
            <person name="Oliver S.G."/>
            <person name="Panzeri L."/>
            <person name="Paoluzi S."/>
            <person name="Plevani P."/>
            <person name="Portetelle D."/>
            <person name="Portillo F."/>
            <person name="Potier S."/>
            <person name="Purnelle B."/>
            <person name="Rieger M."/>
            <person name="Riles L."/>
            <person name="Rinaldi T."/>
            <person name="Robben J."/>
            <person name="Rodrigues-Pousada C."/>
            <person name="Rodriguez-Belmonte E."/>
            <person name="Rodriguez-Torres A.M."/>
            <person name="Rose M."/>
            <person name="Ruzzi M."/>
            <person name="Saliola M."/>
            <person name="Sanchez-Perez M."/>
            <person name="Schaefer B."/>
            <person name="Schaefer M."/>
            <person name="Scharfe M."/>
            <person name="Schmidheini T."/>
            <person name="Schreer A."/>
            <person name="Skala J."/>
            <person name="Souciet J.-L."/>
            <person name="Steensma H.Y."/>
            <person name="Talla E."/>
            <person name="Thierry A."/>
            <person name="Vandenbol M."/>
            <person name="van der Aart Q.J.M."/>
            <person name="Van Dyck L."/>
            <person name="Vanoni M."/>
            <person name="Verhasselt P."/>
            <person name="Voet M."/>
            <person name="Volckaert G."/>
            <person name="Wambutt R."/>
            <person name="Watson M.D."/>
            <person name="Weber N."/>
            <person name="Wedler E."/>
            <person name="Wedler H."/>
            <person name="Wipfli P."/>
            <person name="Wolf K."/>
            <person name="Wright L.F."/>
            <person name="Zaccaria P."/>
            <person name="Zimmermann M."/>
            <person name="Zollner A."/>
            <person name="Kleine K."/>
        </authorList>
    </citation>
    <scope>NUCLEOTIDE SEQUENCE [LARGE SCALE GENOMIC DNA]</scope>
    <source>
        <strain>ATCC 204508 / S288c</strain>
    </source>
</reference>
<reference key="4">
    <citation type="journal article" date="2014" name="G3 (Bethesda)">
        <title>The reference genome sequence of Saccharomyces cerevisiae: Then and now.</title>
        <authorList>
            <person name="Engel S.R."/>
            <person name="Dietrich F.S."/>
            <person name="Fisk D.G."/>
            <person name="Binkley G."/>
            <person name="Balakrishnan R."/>
            <person name="Costanzo M.C."/>
            <person name="Dwight S.S."/>
            <person name="Hitz B.C."/>
            <person name="Karra K."/>
            <person name="Nash R.S."/>
            <person name="Weng S."/>
            <person name="Wong E.D."/>
            <person name="Lloyd P."/>
            <person name="Skrzypek M.S."/>
            <person name="Miyasato S.R."/>
            <person name="Simison M."/>
            <person name="Cherry J.M."/>
        </authorList>
    </citation>
    <scope>GENOME REANNOTATION</scope>
    <source>
        <strain>ATCC 204508 / S288c</strain>
    </source>
</reference>
<reference key="5">
    <citation type="journal article" date="2000" name="EMBO J.">
        <title>Supercomplexes in the respiratory chains of yeast and mammalian mitochondria.</title>
        <authorList>
            <person name="Schaegger H."/>
            <person name="Pfeiffer K."/>
        </authorList>
    </citation>
    <scope>FORMATION OF CYTOCHROME BC1-CYTOCHROME C OXIDASE SUPERCOMPLEX</scope>
</reference>
<reference key="6">
    <citation type="journal article" date="2000" name="J. Biol. Chem.">
        <title>The cytochrome bc1 and cytochrome c oxidase complexes associate to form a single supracomplex in yeast mitochondria.</title>
        <authorList>
            <person name="Cruciat C.M."/>
            <person name="Brunner S."/>
            <person name="Baumann F."/>
            <person name="Neupert W."/>
            <person name="Stuart R.A."/>
        </authorList>
    </citation>
    <scope>FORMATION OF CYTOCHROME BC1-CYTOCHROME C OXIDASE SUPERCOMPLEX</scope>
</reference>
<reference key="7">
    <citation type="journal article" date="2003" name="Nature">
        <title>Global analysis of protein expression in yeast.</title>
        <authorList>
            <person name="Ghaemmaghami S."/>
            <person name="Huh W.-K."/>
            <person name="Bower K."/>
            <person name="Howson R.W."/>
            <person name="Belle A."/>
            <person name="Dephoure N."/>
            <person name="O'Shea E.K."/>
            <person name="Weissman J.S."/>
        </authorList>
    </citation>
    <scope>LEVEL OF PROTEIN EXPRESSION [LARGE SCALE ANALYSIS]</scope>
</reference>
<reference key="8">
    <citation type="journal article" date="2000" name="Structure">
        <title>Structure at 2.3 A resolution of the cytochrome bc1 complex from the yeast Saccharomyces cerevisiae co-crystallized with an antibody Fv fragment.</title>
        <authorList>
            <person name="Hunte C."/>
            <person name="Koepke J."/>
            <person name="Lange C."/>
            <person name="Rossmanith T."/>
            <person name="Michel H."/>
        </authorList>
    </citation>
    <scope>X-RAY CRYSTALLOGRAPHY (2.3 ANGSTROMS)</scope>
</reference>
<reference key="9">
    <citation type="journal article" date="2002" name="Proc. Natl. Acad. Sci. U.S.A.">
        <title>Crystal structure of the yeast cytochrome bc1 complex with its bound substrate cytochrome c.</title>
        <authorList>
            <person name="Lange C."/>
            <person name="Hunte C."/>
        </authorList>
    </citation>
    <scope>X-RAY CRYSTALLOGRAPHY (2.97 ANGSTROMS)</scope>
</reference>
<reference key="10">
    <citation type="journal article" date="2008" name="J. Biol. Chem.">
        <title>Structure of complex III with bound cytochrome c in reduced state and definition of a minimal core interface for electron transfer.</title>
        <authorList>
            <person name="Solmaz S.R."/>
            <person name="Hunte C."/>
        </authorList>
    </citation>
    <scope>X-RAY CRYSTALLOGRAPHY (1.90 ANGSTROMS)</scope>
</reference>
<reference key="11">
    <citation type="journal article" date="2019" name="Nat. Struct. Mol. Biol.">
        <title>Cryo-EM structure of the yeast respiratory supercomplex.</title>
        <authorList>
            <person name="Rathore S."/>
            <person name="Berndtsson J."/>
            <person name="Marin-Buera L."/>
            <person name="Conrad J."/>
            <person name="Carroni M."/>
            <person name="Brzezinski P."/>
            <person name="Ott M."/>
        </authorList>
    </citation>
    <scope>STRUCTURE BY ELECTRON MICROSCOPY (3.23 ANGSTROMS)</scope>
</reference>
<reference key="12">
    <citation type="journal article" date="2019" name="Nat. Struct. Mol. Biol.">
        <title>Structure of yeast cytochrome c oxidase in a supercomplex with cytochrome bc1.</title>
        <authorList>
            <person name="Hartley A.M."/>
            <person name="Lukoyanova N."/>
            <person name="Zhang Y."/>
            <person name="Cabrera-Orefice A."/>
            <person name="Arnold S."/>
            <person name="Meunier B."/>
            <person name="Pinotsis N."/>
            <person name="Marechal A."/>
        </authorList>
    </citation>
    <scope>STRUCTURE BY ELECTRON MICROSCOPY (3.35 ANGSTROMS)</scope>
</reference>
<dbReference type="EMBL" id="M59797">
    <property type="protein sequence ID" value="AAA63575.1"/>
    <property type="molecule type" value="Genomic_DNA"/>
</dbReference>
<dbReference type="EMBL" id="Z72968">
    <property type="protein sequence ID" value="CAA97209.1"/>
    <property type="molecule type" value="Genomic_DNA"/>
</dbReference>
<dbReference type="EMBL" id="BK006941">
    <property type="protein sequence ID" value="DAA08277.1"/>
    <property type="molecule type" value="Genomic_DNA"/>
</dbReference>
<dbReference type="PIR" id="A38325">
    <property type="entry name" value="A38325"/>
</dbReference>
<dbReference type="RefSeq" id="NP_011699.1">
    <property type="nucleotide sequence ID" value="NM_001181312.1"/>
</dbReference>
<dbReference type="PDB" id="1EZV">
    <property type="method" value="X-ray"/>
    <property type="resolution" value="2.30 A"/>
    <property type="chains" value="I=4-58"/>
</dbReference>
<dbReference type="PDB" id="1KB9">
    <property type="method" value="X-ray"/>
    <property type="resolution" value="2.30 A"/>
    <property type="chains" value="I=4-58"/>
</dbReference>
<dbReference type="PDB" id="1KYO">
    <property type="method" value="X-ray"/>
    <property type="resolution" value="2.97 A"/>
    <property type="chains" value="I/T=2-58"/>
</dbReference>
<dbReference type="PDB" id="1P84">
    <property type="method" value="X-ray"/>
    <property type="resolution" value="2.50 A"/>
    <property type="chains" value="I=4-58"/>
</dbReference>
<dbReference type="PDB" id="2IBZ">
    <property type="method" value="X-ray"/>
    <property type="resolution" value="2.30 A"/>
    <property type="chains" value="I=1-66"/>
</dbReference>
<dbReference type="PDB" id="3CX5">
    <property type="method" value="X-ray"/>
    <property type="resolution" value="1.90 A"/>
    <property type="chains" value="I/T=2-66"/>
</dbReference>
<dbReference type="PDB" id="3CXH">
    <property type="method" value="X-ray"/>
    <property type="resolution" value="2.50 A"/>
    <property type="chains" value="I/T=2-66"/>
</dbReference>
<dbReference type="PDB" id="4PD4">
    <property type="method" value="X-ray"/>
    <property type="resolution" value="3.04 A"/>
    <property type="chains" value="I=2-58"/>
</dbReference>
<dbReference type="PDB" id="6GIQ">
    <property type="method" value="EM"/>
    <property type="resolution" value="3.23 A"/>
    <property type="chains" value="I/T=1-66"/>
</dbReference>
<dbReference type="PDB" id="6HU9">
    <property type="method" value="EM"/>
    <property type="resolution" value="3.35 A"/>
    <property type="chains" value="I/T=1-66"/>
</dbReference>
<dbReference type="PDB" id="6T0B">
    <property type="method" value="EM"/>
    <property type="resolution" value="2.80 A"/>
    <property type="chains" value="I/T=1-66"/>
</dbReference>
<dbReference type="PDB" id="6T15">
    <property type="method" value="EM"/>
    <property type="resolution" value="3.29 A"/>
    <property type="chains" value="I/T=1-66"/>
</dbReference>
<dbReference type="PDB" id="8E7S">
    <property type="method" value="EM"/>
    <property type="resolution" value="3.20 A"/>
    <property type="chains" value="E/e=1-66"/>
</dbReference>
<dbReference type="PDB" id="8EC0">
    <property type="method" value="EM"/>
    <property type="resolution" value="3.30 A"/>
    <property type="chains" value="E/e=1-66"/>
</dbReference>
<dbReference type="PDB" id="8YHQ">
    <property type="method" value="EM"/>
    <property type="resolution" value="2.42 A"/>
    <property type="chains" value="I/R=4-58"/>
</dbReference>
<dbReference type="PDB" id="8YIL">
    <property type="method" value="EM"/>
    <property type="resolution" value="2.58 A"/>
    <property type="chains" value="I/T=4-58"/>
</dbReference>
<dbReference type="PDB" id="8YIN">
    <property type="method" value="EM"/>
    <property type="resolution" value="2.74 A"/>
    <property type="chains" value="I/T=4-58"/>
</dbReference>
<dbReference type="PDB" id="8YIO">
    <property type="method" value="EM"/>
    <property type="resolution" value="2.35 A"/>
    <property type="chains" value="I/T=4-58"/>
</dbReference>
<dbReference type="PDB" id="8ZMT">
    <property type="method" value="EM"/>
    <property type="resolution" value="2.52 A"/>
    <property type="chains" value="I/T=4-58"/>
</dbReference>
<dbReference type="PDB" id="9ETZ">
    <property type="method" value="EM"/>
    <property type="resolution" value="2.40 A"/>
    <property type="chains" value="I/T=2-58"/>
</dbReference>
<dbReference type="PDBsum" id="1EZV"/>
<dbReference type="PDBsum" id="1KB9"/>
<dbReference type="PDBsum" id="1KYO"/>
<dbReference type="PDBsum" id="1P84"/>
<dbReference type="PDBsum" id="2IBZ"/>
<dbReference type="PDBsum" id="3CX5"/>
<dbReference type="PDBsum" id="3CXH"/>
<dbReference type="PDBsum" id="4PD4"/>
<dbReference type="PDBsum" id="6GIQ"/>
<dbReference type="PDBsum" id="6HU9"/>
<dbReference type="PDBsum" id="6T0B"/>
<dbReference type="PDBsum" id="6T15"/>
<dbReference type="PDBsum" id="8E7S"/>
<dbReference type="PDBsum" id="8EC0"/>
<dbReference type="PDBsum" id="8YHQ"/>
<dbReference type="PDBsum" id="8YIL"/>
<dbReference type="PDBsum" id="8YIN"/>
<dbReference type="PDBsum" id="8YIO"/>
<dbReference type="PDBsum" id="8ZMT"/>
<dbReference type="PDBsum" id="9ETZ"/>
<dbReference type="EMDB" id="EMD-0262"/>
<dbReference type="EMDB" id="EMD-10317"/>
<dbReference type="EMDB" id="EMD-10340"/>
<dbReference type="EMDB" id="EMD-19963"/>
<dbReference type="EMDB" id="EMD-27940"/>
<dbReference type="EMDB" id="EMD-28011"/>
<dbReference type="EMDB" id="EMD-39291"/>
<dbReference type="EMDB" id="EMD-39322"/>
<dbReference type="EMDB" id="EMD-39323"/>
<dbReference type="EMDB" id="EMD-39324"/>
<dbReference type="EMDB" id="EMD-60256"/>
<dbReference type="SMR" id="P22289"/>
<dbReference type="BioGRID" id="33435">
    <property type="interactions" value="328"/>
</dbReference>
<dbReference type="ComplexPortal" id="CPX-567">
    <property type="entry name" value="Mitochondrial respiratory chain complex III"/>
</dbReference>
<dbReference type="FunCoup" id="P22289">
    <property type="interactions" value="436"/>
</dbReference>
<dbReference type="IntAct" id="P22289">
    <property type="interactions" value="16"/>
</dbReference>
<dbReference type="MINT" id="P22289"/>
<dbReference type="STRING" id="4932.YGR183C"/>
<dbReference type="PaxDb" id="4932-YGR183C"/>
<dbReference type="PeptideAtlas" id="P22289"/>
<dbReference type="TopDownProteomics" id="P22289"/>
<dbReference type="EnsemblFungi" id="YGR183C_mRNA">
    <property type="protein sequence ID" value="YGR183C"/>
    <property type="gene ID" value="YGR183C"/>
</dbReference>
<dbReference type="GeneID" id="853095"/>
<dbReference type="KEGG" id="sce:YGR183C"/>
<dbReference type="AGR" id="SGD:S000003415"/>
<dbReference type="SGD" id="S000003415">
    <property type="gene designation" value="QCR9"/>
</dbReference>
<dbReference type="VEuPathDB" id="FungiDB:YGR183C"/>
<dbReference type="eggNOG" id="KOG3494">
    <property type="taxonomic scope" value="Eukaryota"/>
</dbReference>
<dbReference type="HOGENOM" id="CLU_171977_1_0_1"/>
<dbReference type="InParanoid" id="P22289"/>
<dbReference type="OMA" id="ANAGMQW"/>
<dbReference type="OrthoDB" id="44067at2759"/>
<dbReference type="BioCyc" id="MetaCyc:YGR183C-MONOMER"/>
<dbReference type="BioCyc" id="YEAST:YGR183C-MONOMER"/>
<dbReference type="Reactome" id="R-SCE-611105">
    <property type="pathway name" value="Respiratory electron transport"/>
</dbReference>
<dbReference type="Reactome" id="R-SCE-9865878">
    <property type="pathway name" value="Complex III assembly"/>
</dbReference>
<dbReference type="BioGRID-ORCS" id="853095">
    <property type="hits" value="0 hits in 10 CRISPR screens"/>
</dbReference>
<dbReference type="EvolutionaryTrace" id="P22289"/>
<dbReference type="PRO" id="PR:P22289"/>
<dbReference type="Proteomes" id="UP000002311">
    <property type="component" value="Chromosome VII"/>
</dbReference>
<dbReference type="RNAct" id="P22289">
    <property type="molecule type" value="protein"/>
</dbReference>
<dbReference type="GO" id="GO:0005743">
    <property type="term" value="C:mitochondrial inner membrane"/>
    <property type="evidence" value="ECO:0000314"/>
    <property type="project" value="ComplexPortal"/>
</dbReference>
<dbReference type="GO" id="GO:0005739">
    <property type="term" value="C:mitochondrion"/>
    <property type="evidence" value="ECO:0000314"/>
    <property type="project" value="SGD"/>
</dbReference>
<dbReference type="GO" id="GO:0045275">
    <property type="term" value="C:respiratory chain complex III"/>
    <property type="evidence" value="ECO:0000314"/>
    <property type="project" value="SGD"/>
</dbReference>
<dbReference type="GO" id="GO:0009060">
    <property type="term" value="P:aerobic respiration"/>
    <property type="evidence" value="ECO:0000315"/>
    <property type="project" value="SGD"/>
</dbReference>
<dbReference type="GO" id="GO:0045333">
    <property type="term" value="P:cellular respiration"/>
    <property type="evidence" value="ECO:0000314"/>
    <property type="project" value="ComplexPortal"/>
</dbReference>
<dbReference type="GO" id="GO:0006122">
    <property type="term" value="P:mitochondrial electron transport, ubiquinol to cytochrome c"/>
    <property type="evidence" value="ECO:0000314"/>
    <property type="project" value="ComplexPortal"/>
</dbReference>
<dbReference type="GO" id="GO:0034551">
    <property type="term" value="P:mitochondrial respiratory chain complex III assembly"/>
    <property type="evidence" value="ECO:0000315"/>
    <property type="project" value="SGD"/>
</dbReference>
<dbReference type="GO" id="GO:1902600">
    <property type="term" value="P:proton transmembrane transport"/>
    <property type="evidence" value="ECO:0007669"/>
    <property type="project" value="GOC"/>
</dbReference>
<dbReference type="FunFam" id="1.20.5.260:FF:000001">
    <property type="entry name" value="Cytochrome b-c1 complex subunit 9"/>
    <property type="match status" value="1"/>
</dbReference>
<dbReference type="Gene3D" id="1.20.5.260">
    <property type="entry name" value="Cytochrome b-c1 complex subunit 9"/>
    <property type="match status" value="1"/>
</dbReference>
<dbReference type="InterPro" id="IPR008027">
    <property type="entry name" value="QCR9"/>
</dbReference>
<dbReference type="InterPro" id="IPR036656">
    <property type="entry name" value="QCR9_sf"/>
</dbReference>
<dbReference type="PANTHER" id="PTHR12980:SF0">
    <property type="entry name" value="CYTOCHROME B-C1 COMPLEX SUBUNIT 9"/>
    <property type="match status" value="1"/>
</dbReference>
<dbReference type="PANTHER" id="PTHR12980">
    <property type="entry name" value="UBIQUINOL-CYTOCHROME C REDUCTASE COMPLEX, SUBUNIT X"/>
    <property type="match status" value="1"/>
</dbReference>
<dbReference type="Pfam" id="PF05365">
    <property type="entry name" value="UCR_UQCRX_QCR9"/>
    <property type="match status" value="1"/>
</dbReference>
<dbReference type="SUPFAM" id="SSF81514">
    <property type="entry name" value="Subunit X (non-heme 7 kDa protein) of cytochrome bc1 complex (Ubiquinol-cytochrome c reductase)"/>
    <property type="match status" value="1"/>
</dbReference>
<protein>
    <recommendedName>
        <fullName>Cytochrome b-c1 complex subunit 9, mitochondrial</fullName>
    </recommendedName>
    <alternativeName>
        <fullName>Complex III subunit 9</fullName>
    </alternativeName>
    <alternativeName>
        <fullName>Complex III subunit X</fullName>
    </alternativeName>
    <alternativeName>
        <fullName>Cytochrome c1 non-heme 7.3 kDa protein</fullName>
    </alternativeName>
    <alternativeName>
        <fullName>Ubiquinol-cytochrome c oxidoreductase subunit 9</fullName>
    </alternativeName>
    <alternativeName>
        <fullName>Ubiquinol-cytochrome c reductase 7.3 kDa protein</fullName>
    </alternativeName>
</protein>
<keyword id="KW-0002">3D-structure</keyword>
<keyword id="KW-0903">Direct protein sequencing</keyword>
<keyword id="KW-0249">Electron transport</keyword>
<keyword id="KW-0472">Membrane</keyword>
<keyword id="KW-0496">Mitochondrion</keyword>
<keyword id="KW-0999">Mitochondrion inner membrane</keyword>
<keyword id="KW-1185">Reference proteome</keyword>
<keyword id="KW-0679">Respiratory chain</keyword>
<keyword id="KW-0812">Transmembrane</keyword>
<keyword id="KW-1133">Transmembrane helix</keyword>
<keyword id="KW-0813">Transport</keyword>
<sequence>MSFSSLYKTFFKRNAVFVGTIFAGAFVFQTVFDTAITSWYENHNKGKLWKDVKARIAAGDGDDDDE</sequence>
<comment type="function">
    <text evidence="11">Component of the ubiquinol-cytochrome c oxidoreductase, a multisubunit transmembrane complex that is part of the mitochondrial electron transport chain which drives oxidative phosphorylation. The respiratory chain contains 3 multisubunit complexes succinate dehydrogenase (complex II, CII), ubiquinol-cytochrome c oxidoreductase (cytochrome b-c1 complex, complex III, CIII) and cytochrome c oxidase (complex IV, CIV), that cooperate to transfer electrons derived from NADH and succinate to molecular oxygen, creating an electrochemical gradient over the inner membrane that drives transmembrane transport and the ATP synthase. The cytochrome b-c1 complex catalyzes electron transfer from ubiquinol to cytochrome c, linking this redox reaction to translocation of protons across the mitochondrial inner membrane, with protons being carried across the membrane as hydrogens on the quinol. In the process called Q cycle, 2 protons are consumed from the matrix, 4 protons are released into the intermembrane space and 2 electrons are passed to cytochrome c.</text>
</comment>
<comment type="subunit">
    <text evidence="1 2 3 4 6 8 9">Component of the ubiquinol-cytochrome c oxidoreductase (cytochrome b-c1 complex, complex III, CIII), a multisubunit enzyme composed of 10 subunits. The complex is composed of 3 respiratory subunits cytochrome b (COB), cytochrome c1 (CYT1) and Rieske protein (RIP1), 2 core protein subunits COR1 and QCR2, and 5 low-molecular weight protein subunits QCR6, QCR7, QCR8, QCR9 and QCR10 (PubMed:10873857, PubMed:11880631, PubMed:18390544, PubMed:30598554). The complex exists as an obligatory dimer and forms supercomplexes (SCs) in the inner mitochondrial membrane with a monomer or a dimer of cytochrome c oxidase (complex IV, CIV), resulting in 2 different assemblies (supercomplexes III(2)IV and III(2)IV(2)) (PubMed:10764779, PubMed:10775262, PubMed:30598554, PubMed:30598556). Interacts with the transmembrane segment of RIP1 (PubMed:30598556).</text>
</comment>
<comment type="subcellular location">
    <subcellularLocation>
        <location evidence="6 8">Mitochondrion inner membrane</location>
        <topology evidence="6 8">Single-pass membrane protein</topology>
    </subcellularLocation>
</comment>
<comment type="miscellaneous">
    <text evidence="5">Present with 4550 molecules/cell in log phase SD medium.</text>
</comment>
<comment type="similarity">
    <text evidence="10">Belongs to the UQCR10/QCR9 family.</text>
</comment>